<sequence length="642" mass="72380">MAAAAAATAAAAASIRERQTVALKRMLNFNVPHIKNSTGEPVWKVLIYDRFGQDIISPLLSVKELRDMGITLHLLLHSDRDPIPDVPAVYFVMPTEENIDRMCQDLRNQLYESYYLNFISAISRSKLEDIANAALAASAVTQVAKVFDQYLNFITLEDDMFVLCNQNKELVSYRAINRPDITDTEMETVMDTIVDSLFCFFVTLGAVPIIRCSRGTAAEMVAVKLDKKLRENLRDARNSLFTGDTLGAGQFSFQRPLLVLVDRNIDLATPLHHTWTYQALVHDVLDFHLNRVNLEESSGVENSPAGARPKRKNKKSYDLTPVDKFWQKHKGSPFPEVAESVQQELESYRAQEDEVKRLKSIMGLEGEDEGAISMLSDNTAKLTSAVSSLPELLEKKRLIDLHTNVATAVLEHIKARKLDVYFEYEEKIMSKTTLDKSLLDIISDPDAGTPEDKMRLFLIYYISTQQAPSEADLEQYKKALTDAGCNLNPLQYIKQWKAFTKMASAPASYGSTTTKPMGLLSRVMNTGSQFVMEGVKNLVLKQQNLPVTRILDNLMEMKSNPETDDYRYFDPKMLRGNDSSVPRNKNPFQEAIVFVVGGGNYIEYQNLVDYIKGKQGKHILYGCSELFNATQFIKQLSQLGQK</sequence>
<organism>
    <name type="scientific">Homo sapiens</name>
    <name type="common">Human</name>
    <dbReference type="NCBI Taxonomy" id="9606"/>
    <lineage>
        <taxon>Eukaryota</taxon>
        <taxon>Metazoa</taxon>
        <taxon>Chordata</taxon>
        <taxon>Craniata</taxon>
        <taxon>Vertebrata</taxon>
        <taxon>Euteleostomi</taxon>
        <taxon>Mammalia</taxon>
        <taxon>Eutheria</taxon>
        <taxon>Euarchontoglires</taxon>
        <taxon>Primates</taxon>
        <taxon>Haplorrhini</taxon>
        <taxon>Catarrhini</taxon>
        <taxon>Hominidae</taxon>
        <taxon>Homo</taxon>
    </lineage>
</organism>
<accession>Q8WVM8</accession>
<accession>A8K2Z5</accession>
<accession>B7Z4U7</accession>
<accession>B7Z594</accession>
<accession>O60754</accession>
<accession>O94990</accession>
<accession>Q7Z529</accession>
<accession>Q9BZI3</accession>
<accession>Q9UNL3</accession>
<accession>Q9Y6A8</accession>
<comment type="function">
    <text evidence="1">Plays a role in SNARE-pin assembly and Golgi-to-ER retrograde transport via its interaction with COG4. Involved in vesicular transport between the endoplasmic reticulum and the Golgi (By similarity).</text>
</comment>
<comment type="subunit">
    <text evidence="1">Interacts with STX17. Interacts with STX5A. Interacts with the COG complex via COG4 (By similarity).</text>
</comment>
<comment type="interaction">
    <interactant intactId="EBI-722569">
        <id>Q8WVM8</id>
    </interactant>
    <interactant intactId="EBI-368382">
        <id>Q9H9E3</id>
        <label>COG4</label>
    </interactant>
    <organismsDiffer>false</organismsDiffer>
    <experiments>10</experiments>
</comment>
<comment type="interaction">
    <interactant intactId="EBI-722569">
        <id>Q8WVM8</id>
    </interactant>
    <interactant intactId="EBI-466029">
        <id>P42858</id>
        <label>HTT</label>
    </interactant>
    <organismsDiffer>false</organismsDiffer>
    <experiments>3</experiments>
</comment>
<comment type="subcellular location">
    <subcellularLocation>
        <location evidence="1">Cytoplasm</location>
    </subcellularLocation>
    <subcellularLocation>
        <location evidence="1">Endoplasmic reticulum membrane</location>
        <topology evidence="1">Peripheral membrane protein</topology>
    </subcellularLocation>
    <subcellularLocation>
        <location evidence="1">Golgi apparatus</location>
        <location evidence="1">Golgi stack membrane</location>
        <topology evidence="1">Peripheral membrane protein</topology>
    </subcellularLocation>
</comment>
<comment type="alternative products">
    <event type="alternative splicing"/>
    <isoform>
        <id>Q8WVM8-1</id>
        <name>1</name>
        <sequence type="displayed"/>
    </isoform>
    <isoform>
        <id>Q8WVM8-2</id>
        <name>2</name>
        <sequence type="described" ref="VSP_047070"/>
    </isoform>
    <isoform>
        <id>Q8WVM8-3</id>
        <name>3</name>
        <sequence type="described" ref="VSP_047071"/>
    </isoform>
</comment>
<comment type="similarity">
    <text evidence="8">Belongs to the STXBP/unc-18/SEC1 family.</text>
</comment>
<comment type="sequence caution" evidence="8">
    <conflict type="frameshift">
        <sequence resource="EMBL-CDS" id="AAD40381"/>
    </conflict>
</comment>
<comment type="sequence caution" evidence="8">
    <conflict type="frameshift">
        <sequence resource="EMBL-CDS" id="AAD48586"/>
    </conflict>
</comment>
<comment type="sequence caution" evidence="8">
    <conflict type="frameshift">
        <sequence resource="EMBL-CDS" id="AAP97146"/>
    </conflict>
</comment>
<comment type="sequence caution" evidence="8">
    <conflict type="erroneous initiation">
        <sequence resource="EMBL-CDS" id="BAA74940"/>
    </conflict>
</comment>
<feature type="initiator methionine" description="Removed" evidence="3 6 11 13 14 17">
    <location>
        <position position="1"/>
    </location>
</feature>
<feature type="chain" id="PRO_0000206287" description="Sec1 family domain-containing protein 1">
    <location>
        <begin position="2"/>
        <end position="642"/>
    </location>
</feature>
<feature type="modified residue" description="N-acetylalanine" evidence="6 11 13 14 17">
    <location>
        <position position="2"/>
    </location>
</feature>
<feature type="modified residue" description="Phosphoserine" evidence="2">
    <location>
        <position position="37"/>
    </location>
</feature>
<feature type="modified residue" description="Phosphoserine" evidence="9 10 12 15 16">
    <location>
        <position position="303"/>
    </location>
</feature>
<feature type="modified residue" description="Phosphoserine" evidence="15">
    <location>
        <position position="528"/>
    </location>
</feature>
<feature type="splice variant" id="VSP_047070" description="In isoform 2." evidence="7">
    <location>
        <begin position="1"/>
        <end position="92"/>
    </location>
</feature>
<feature type="splice variant" id="VSP_047071" description="In isoform 3." evidence="7">
    <location>
        <begin position="1"/>
        <end position="67"/>
    </location>
</feature>
<feature type="sequence variant" id="VAR_019616" description="In dbSNP:rs229150." evidence="4 5">
    <original>K</original>
    <variation>R</variation>
    <location>
        <position position="63"/>
    </location>
</feature>
<feature type="sequence conflict" description="In Ref. 3; AAG50273." evidence="8" ref="3">
    <original>V</original>
    <variation>I</variation>
    <location>
        <position position="42"/>
    </location>
</feature>
<feature type="sequence conflict" description="In Ref. 2; AAD40381." evidence="8" ref="2">
    <original>AA</original>
    <variation>EL</variation>
    <location>
        <begin position="136"/>
        <end position="137"/>
    </location>
</feature>
<feature type="sequence conflict" description="In Ref. 2; AAD48586." evidence="8" ref="2">
    <original>FVTLGA</original>
    <variation>YGTRGD</variation>
    <location>
        <begin position="201"/>
        <end position="206"/>
    </location>
</feature>
<feature type="sequence conflict" description="In Ref. 2; AAD40381 and 4; AAP97146." evidence="8" ref="2 4">
    <original>FV</original>
    <variation>YG</variation>
    <location>
        <begin position="201"/>
        <end position="202"/>
    </location>
</feature>
<feature type="sequence conflict" description="In Ref. 4; AAP97146." evidence="8" ref="4">
    <original>A</original>
    <variation>D</variation>
    <location>
        <position position="206"/>
    </location>
</feature>
<feature type="sequence conflict" description="In Ref. 2; AAD48586." evidence="8" ref="2">
    <original>K</original>
    <variation>N</variation>
    <location>
        <position position="453"/>
    </location>
</feature>
<feature type="sequence conflict" description="In Ref. 2; AAD40381." evidence="8" ref="2">
    <original>GC</original>
    <variation>EM</variation>
    <location>
        <begin position="484"/>
        <end position="485"/>
    </location>
</feature>
<feature type="sequence conflict" description="In Ref. 2; AAD48586." evidence="8" ref="2">
    <location>
        <position position="485"/>
    </location>
</feature>
<feature type="sequence conflict" description="In Ref. 2; AAD40381." evidence="8" ref="2">
    <original>ET</original>
    <variation>KL</variation>
    <location>
        <begin position="562"/>
        <end position="563"/>
    </location>
</feature>
<protein>
    <recommendedName>
        <fullName>Sec1 family domain-containing protein 1</fullName>
    </recommendedName>
    <alternativeName>
        <fullName>SLY1 homolog</fullName>
        <shortName>Sly1p</shortName>
    </alternativeName>
    <alternativeName>
        <fullName>Syntaxin-binding protein 1-like 2</fullName>
    </alternativeName>
</protein>
<evidence type="ECO:0000250" key="1"/>
<evidence type="ECO:0000250" key="2">
    <source>
        <dbReference type="UniProtKB" id="Q62991"/>
    </source>
</evidence>
<evidence type="ECO:0000269" key="3">
    <source>
    </source>
</evidence>
<evidence type="ECO:0000269" key="4">
    <source>
    </source>
</evidence>
<evidence type="ECO:0000269" key="5">
    <source>
    </source>
</evidence>
<evidence type="ECO:0000269" key="6">
    <source ref="10"/>
</evidence>
<evidence type="ECO:0000303" key="7">
    <source>
    </source>
</evidence>
<evidence type="ECO:0000305" key="8"/>
<evidence type="ECO:0007744" key="9">
    <source>
    </source>
</evidence>
<evidence type="ECO:0007744" key="10">
    <source>
    </source>
</evidence>
<evidence type="ECO:0007744" key="11">
    <source>
    </source>
</evidence>
<evidence type="ECO:0007744" key="12">
    <source>
    </source>
</evidence>
<evidence type="ECO:0007744" key="13">
    <source>
    </source>
</evidence>
<evidence type="ECO:0007744" key="14">
    <source>
    </source>
</evidence>
<evidence type="ECO:0007744" key="15">
    <source>
    </source>
</evidence>
<evidence type="ECO:0007744" key="16">
    <source>
    </source>
</evidence>
<evidence type="ECO:0007744" key="17">
    <source>
    </source>
</evidence>
<keyword id="KW-0007">Acetylation</keyword>
<keyword id="KW-0025">Alternative splicing</keyword>
<keyword id="KW-0963">Cytoplasm</keyword>
<keyword id="KW-0903">Direct protein sequencing</keyword>
<keyword id="KW-0256">Endoplasmic reticulum</keyword>
<keyword id="KW-0931">ER-Golgi transport</keyword>
<keyword id="KW-0333">Golgi apparatus</keyword>
<keyword id="KW-0472">Membrane</keyword>
<keyword id="KW-0597">Phosphoprotein</keyword>
<keyword id="KW-0653">Protein transport</keyword>
<keyword id="KW-1267">Proteomics identification</keyword>
<keyword id="KW-1185">Reference proteome</keyword>
<keyword id="KW-0813">Transport</keyword>
<reference key="1">
    <citation type="journal article" date="1998" name="DNA Res.">
        <title>Prediction of the coding sequences of unidentified human genes. XII. The complete sequences of 100 new cDNA clones from brain which code for large proteins in vitro.</title>
        <authorList>
            <person name="Nagase T."/>
            <person name="Ishikawa K."/>
            <person name="Suyama M."/>
            <person name="Kikuno R."/>
            <person name="Hirosawa M."/>
            <person name="Miyajima N."/>
            <person name="Tanaka A."/>
            <person name="Kotani H."/>
            <person name="Nomura N."/>
            <person name="Ohara O."/>
        </authorList>
    </citation>
    <scope>NUCLEOTIDE SEQUENCE [LARGE SCALE MRNA] (ISOFORM 1)</scope>
    <source>
        <tissue>Brain</tissue>
    </source>
</reference>
<reference key="2">
    <citation type="submission" date="1998-12" db="EMBL/GenBank/DDBJ databases">
        <title>Human vesicle transport-related protein gene.</title>
        <authorList>
            <person name="Song H."/>
            <person name="Peng Y."/>
            <person name="Dai M."/>
            <person name="Huang Q."/>
            <person name="Mao Y."/>
            <person name="Zhang Q."/>
            <person name="Mao M."/>
            <person name="Fu G."/>
            <person name="Luo M."/>
            <person name="Chen J."/>
            <person name="Hu R."/>
        </authorList>
    </citation>
    <scope>NUCLEOTIDE SEQUENCE [MRNA] (ISOFORM 1)</scope>
    <source>
        <tissue>Pituitary</tissue>
    </source>
</reference>
<reference key="3">
    <citation type="submission" date="2000-11" db="EMBL/GenBank/DDBJ databases">
        <title>Identification of FKSG23, a vesicle transport-related protein.</title>
        <authorList>
            <person name="Wang Y.-G."/>
            <person name="Gong L."/>
        </authorList>
    </citation>
    <scope>NUCLEOTIDE SEQUENCE [MRNA] (ISOFORM 1)</scope>
</reference>
<reference key="4">
    <citation type="submission" date="2003-07" db="EMBL/GenBank/DDBJ databases">
        <title>Cloning of a novel human cDNA homology to R.norvegicus rsly1p mRNA.</title>
        <authorList>
            <person name="Dai F.Y."/>
            <person name="Yu L."/>
            <person name="Ding J.B."/>
            <person name="Lin W."/>
            <person name="Yang Y.M."/>
            <person name="Zhao S.Y."/>
        </authorList>
    </citation>
    <scope>NUCLEOTIDE SEQUENCE [MRNA] (ISOFORM 1)</scope>
</reference>
<reference key="5">
    <citation type="journal article" date="2004" name="Nat. Genet.">
        <title>Complete sequencing and characterization of 21,243 full-length human cDNAs.</title>
        <authorList>
            <person name="Ota T."/>
            <person name="Suzuki Y."/>
            <person name="Nishikawa T."/>
            <person name="Otsuki T."/>
            <person name="Sugiyama T."/>
            <person name="Irie R."/>
            <person name="Wakamatsu A."/>
            <person name="Hayashi K."/>
            <person name="Sato H."/>
            <person name="Nagai K."/>
            <person name="Kimura K."/>
            <person name="Makita H."/>
            <person name="Sekine M."/>
            <person name="Obayashi M."/>
            <person name="Nishi T."/>
            <person name="Shibahara T."/>
            <person name="Tanaka T."/>
            <person name="Ishii S."/>
            <person name="Yamamoto J."/>
            <person name="Saito K."/>
            <person name="Kawai Y."/>
            <person name="Isono Y."/>
            <person name="Nakamura Y."/>
            <person name="Nagahari K."/>
            <person name="Murakami K."/>
            <person name="Yasuda T."/>
            <person name="Iwayanagi T."/>
            <person name="Wagatsuma M."/>
            <person name="Shiratori A."/>
            <person name="Sudo H."/>
            <person name="Hosoiri T."/>
            <person name="Kaku Y."/>
            <person name="Kodaira H."/>
            <person name="Kondo H."/>
            <person name="Sugawara M."/>
            <person name="Takahashi M."/>
            <person name="Kanda K."/>
            <person name="Yokoi T."/>
            <person name="Furuya T."/>
            <person name="Kikkawa E."/>
            <person name="Omura Y."/>
            <person name="Abe K."/>
            <person name="Kamihara K."/>
            <person name="Katsuta N."/>
            <person name="Sato K."/>
            <person name="Tanikawa M."/>
            <person name="Yamazaki M."/>
            <person name="Ninomiya K."/>
            <person name="Ishibashi T."/>
            <person name="Yamashita H."/>
            <person name="Murakawa K."/>
            <person name="Fujimori K."/>
            <person name="Tanai H."/>
            <person name="Kimata M."/>
            <person name="Watanabe M."/>
            <person name="Hiraoka S."/>
            <person name="Chiba Y."/>
            <person name="Ishida S."/>
            <person name="Ono Y."/>
            <person name="Takiguchi S."/>
            <person name="Watanabe S."/>
            <person name="Yosida M."/>
            <person name="Hotuta T."/>
            <person name="Kusano J."/>
            <person name="Kanehori K."/>
            <person name="Takahashi-Fujii A."/>
            <person name="Hara H."/>
            <person name="Tanase T.-O."/>
            <person name="Nomura Y."/>
            <person name="Togiya S."/>
            <person name="Komai F."/>
            <person name="Hara R."/>
            <person name="Takeuchi K."/>
            <person name="Arita M."/>
            <person name="Imose N."/>
            <person name="Musashino K."/>
            <person name="Yuuki H."/>
            <person name="Oshima A."/>
            <person name="Sasaki N."/>
            <person name="Aotsuka S."/>
            <person name="Yoshikawa Y."/>
            <person name="Matsunawa H."/>
            <person name="Ichihara T."/>
            <person name="Shiohata N."/>
            <person name="Sano S."/>
            <person name="Moriya S."/>
            <person name="Momiyama H."/>
            <person name="Satoh N."/>
            <person name="Takami S."/>
            <person name="Terashima Y."/>
            <person name="Suzuki O."/>
            <person name="Nakagawa S."/>
            <person name="Senoh A."/>
            <person name="Mizoguchi H."/>
            <person name="Goto Y."/>
            <person name="Shimizu F."/>
            <person name="Wakebe H."/>
            <person name="Hishigaki H."/>
            <person name="Watanabe T."/>
            <person name="Sugiyama A."/>
            <person name="Takemoto M."/>
            <person name="Kawakami B."/>
            <person name="Yamazaki M."/>
            <person name="Watanabe K."/>
            <person name="Kumagai A."/>
            <person name="Itakura S."/>
            <person name="Fukuzumi Y."/>
            <person name="Fujimori Y."/>
            <person name="Komiyama M."/>
            <person name="Tashiro H."/>
            <person name="Tanigami A."/>
            <person name="Fujiwara T."/>
            <person name="Ono T."/>
            <person name="Yamada K."/>
            <person name="Fujii Y."/>
            <person name="Ozaki K."/>
            <person name="Hirao M."/>
            <person name="Ohmori Y."/>
            <person name="Kawabata A."/>
            <person name="Hikiji T."/>
            <person name="Kobatake N."/>
            <person name="Inagaki H."/>
            <person name="Ikema Y."/>
            <person name="Okamoto S."/>
            <person name="Okitani R."/>
            <person name="Kawakami T."/>
            <person name="Noguchi S."/>
            <person name="Itoh T."/>
            <person name="Shigeta K."/>
            <person name="Senba T."/>
            <person name="Matsumura K."/>
            <person name="Nakajima Y."/>
            <person name="Mizuno T."/>
            <person name="Morinaga M."/>
            <person name="Sasaki M."/>
            <person name="Togashi T."/>
            <person name="Oyama M."/>
            <person name="Hata H."/>
            <person name="Watanabe M."/>
            <person name="Komatsu T."/>
            <person name="Mizushima-Sugano J."/>
            <person name="Satoh T."/>
            <person name="Shirai Y."/>
            <person name="Takahashi Y."/>
            <person name="Nakagawa K."/>
            <person name="Okumura K."/>
            <person name="Nagase T."/>
            <person name="Nomura N."/>
            <person name="Kikuchi H."/>
            <person name="Masuho Y."/>
            <person name="Yamashita R."/>
            <person name="Nakai K."/>
            <person name="Yada T."/>
            <person name="Nakamura Y."/>
            <person name="Ohara O."/>
            <person name="Isogai T."/>
            <person name="Sugano S."/>
        </authorList>
    </citation>
    <scope>NUCLEOTIDE SEQUENCE [LARGE SCALE MRNA] (ISOFORMS 1; 2 AND 3)</scope>
    <scope>VARIANT ARG-63</scope>
    <source>
        <tissue>Heart</tissue>
        <tissue>Umbilical cord blood</tissue>
    </source>
</reference>
<reference key="6">
    <citation type="journal article" date="2003" name="Nature">
        <title>The DNA sequence and analysis of human chromosome 14.</title>
        <authorList>
            <person name="Heilig R."/>
            <person name="Eckenberg R."/>
            <person name="Petit J.-L."/>
            <person name="Fonknechten N."/>
            <person name="Da Silva C."/>
            <person name="Cattolico L."/>
            <person name="Levy M."/>
            <person name="Barbe V."/>
            <person name="De Berardinis V."/>
            <person name="Ureta-Vidal A."/>
            <person name="Pelletier E."/>
            <person name="Vico V."/>
            <person name="Anthouard V."/>
            <person name="Rowen L."/>
            <person name="Madan A."/>
            <person name="Qin S."/>
            <person name="Sun H."/>
            <person name="Du H."/>
            <person name="Pepin K."/>
            <person name="Artiguenave F."/>
            <person name="Robert C."/>
            <person name="Cruaud C."/>
            <person name="Bruels T."/>
            <person name="Jaillon O."/>
            <person name="Friedlander L."/>
            <person name="Samson G."/>
            <person name="Brottier P."/>
            <person name="Cure S."/>
            <person name="Segurens B."/>
            <person name="Aniere F."/>
            <person name="Samain S."/>
            <person name="Crespeau H."/>
            <person name="Abbasi N."/>
            <person name="Aiach N."/>
            <person name="Boscus D."/>
            <person name="Dickhoff R."/>
            <person name="Dors M."/>
            <person name="Dubois I."/>
            <person name="Friedman C."/>
            <person name="Gouyvenoux M."/>
            <person name="James R."/>
            <person name="Madan A."/>
            <person name="Mairey-Estrada B."/>
            <person name="Mangenot S."/>
            <person name="Martins N."/>
            <person name="Menard M."/>
            <person name="Oztas S."/>
            <person name="Ratcliffe A."/>
            <person name="Shaffer T."/>
            <person name="Trask B."/>
            <person name="Vacherie B."/>
            <person name="Bellemere C."/>
            <person name="Belser C."/>
            <person name="Besnard-Gonnet M."/>
            <person name="Bartol-Mavel D."/>
            <person name="Boutard M."/>
            <person name="Briez-Silla S."/>
            <person name="Combette S."/>
            <person name="Dufosse-Laurent V."/>
            <person name="Ferron C."/>
            <person name="Lechaplais C."/>
            <person name="Louesse C."/>
            <person name="Muselet D."/>
            <person name="Magdelenat G."/>
            <person name="Pateau E."/>
            <person name="Petit E."/>
            <person name="Sirvain-Trukniewicz P."/>
            <person name="Trybou A."/>
            <person name="Vega-Czarny N."/>
            <person name="Bataille E."/>
            <person name="Bluet E."/>
            <person name="Bordelais I."/>
            <person name="Dubois M."/>
            <person name="Dumont C."/>
            <person name="Guerin T."/>
            <person name="Haffray S."/>
            <person name="Hammadi R."/>
            <person name="Muanga J."/>
            <person name="Pellouin V."/>
            <person name="Robert D."/>
            <person name="Wunderle E."/>
            <person name="Gauguet G."/>
            <person name="Roy A."/>
            <person name="Sainte-Marthe L."/>
            <person name="Verdier J."/>
            <person name="Verdier-Discala C."/>
            <person name="Hillier L.W."/>
            <person name="Fulton L."/>
            <person name="McPherson J."/>
            <person name="Matsuda F."/>
            <person name="Wilson R."/>
            <person name="Scarpelli C."/>
            <person name="Gyapay G."/>
            <person name="Wincker P."/>
            <person name="Saurin W."/>
            <person name="Quetier F."/>
            <person name="Waterston R."/>
            <person name="Hood L."/>
            <person name="Weissenbach J."/>
        </authorList>
    </citation>
    <scope>NUCLEOTIDE SEQUENCE [LARGE SCALE GENOMIC DNA]</scope>
</reference>
<reference key="7">
    <citation type="submission" date="2005-07" db="EMBL/GenBank/DDBJ databases">
        <authorList>
            <person name="Mural R.J."/>
            <person name="Istrail S."/>
            <person name="Sutton G.G."/>
            <person name="Florea L."/>
            <person name="Halpern A.L."/>
            <person name="Mobarry C.M."/>
            <person name="Lippert R."/>
            <person name="Walenz B."/>
            <person name="Shatkay H."/>
            <person name="Dew I."/>
            <person name="Miller J.R."/>
            <person name="Flanigan M.J."/>
            <person name="Edwards N.J."/>
            <person name="Bolanos R."/>
            <person name="Fasulo D."/>
            <person name="Halldorsson B.V."/>
            <person name="Hannenhalli S."/>
            <person name="Turner R."/>
            <person name="Yooseph S."/>
            <person name="Lu F."/>
            <person name="Nusskern D.R."/>
            <person name="Shue B.C."/>
            <person name="Zheng X.H."/>
            <person name="Zhong F."/>
            <person name="Delcher A.L."/>
            <person name="Huson D.H."/>
            <person name="Kravitz S.A."/>
            <person name="Mouchard L."/>
            <person name="Reinert K."/>
            <person name="Remington K.A."/>
            <person name="Clark A.G."/>
            <person name="Waterman M.S."/>
            <person name="Eichler E.E."/>
            <person name="Adams M.D."/>
            <person name="Hunkapiller M.W."/>
            <person name="Myers E.W."/>
            <person name="Venter J.C."/>
        </authorList>
    </citation>
    <scope>NUCLEOTIDE SEQUENCE [LARGE SCALE GENOMIC DNA]</scope>
</reference>
<reference key="8">
    <citation type="journal article" date="2004" name="Genome Res.">
        <title>The status, quality, and expansion of the NIH full-length cDNA project: the Mammalian Gene Collection (MGC).</title>
        <authorList>
            <consortium name="The MGC Project Team"/>
        </authorList>
    </citation>
    <scope>NUCLEOTIDE SEQUENCE [LARGE SCALE MRNA] (ISOFORM 1)</scope>
    <scope>VARIANT ARG-63</scope>
    <source>
        <tissue>Lymph</tissue>
    </source>
</reference>
<reference key="9">
    <citation type="journal article" date="2003" name="Nat. Biotechnol.">
        <title>Exploring proteomes and analyzing protein processing by mass spectrometric identification of sorted N-terminal peptides.</title>
        <authorList>
            <person name="Gevaert K."/>
            <person name="Goethals M."/>
            <person name="Martens L."/>
            <person name="Van Damme J."/>
            <person name="Staes A."/>
            <person name="Thomas G.R."/>
            <person name="Vandekerckhove J."/>
        </authorList>
    </citation>
    <scope>PROTEIN SEQUENCE OF 2-16</scope>
    <source>
        <tissue>Platelet</tissue>
    </source>
</reference>
<reference key="10">
    <citation type="submission" date="2009-07" db="UniProtKB">
        <authorList>
            <person name="Bienvenut W.V."/>
            <person name="Gao M."/>
            <person name="Leug H."/>
            <person name="Campbell A."/>
            <person name="Ozanne B.W."/>
        </authorList>
    </citation>
    <scope>PROTEIN SEQUENCE OF 2-16; 125-145; 382-395 AND 502-536</scope>
    <scope>CLEAVAGE OF INITIATOR METHIONINE</scope>
    <scope>ACETYLATION AT ALA-2</scope>
    <scope>IDENTIFICATION BY MASS SPECTROMETRY</scope>
    <source>
        <tissue>Foreskin fibroblast</tissue>
        <tissue>Prostatic carcinoma</tissue>
    </source>
</reference>
<reference key="11">
    <citation type="submission" date="1998-05" db="EMBL/GenBank/DDBJ databases">
        <title>Differential display of placental genes.</title>
        <authorList>
            <person name="Page N.M."/>
            <person name="Butlin D.J."/>
            <person name="Manyonda I."/>
            <person name="Bicknell A.B."/>
            <person name="Lowry P.J."/>
        </authorList>
    </citation>
    <scope>NUCLEOTIDE SEQUENCE [MRNA] OF 572-642</scope>
    <source>
        <tissue>Placenta</tissue>
    </source>
</reference>
<reference key="12">
    <citation type="journal article" date="2007" name="Science">
        <title>ATM and ATR substrate analysis reveals extensive protein networks responsive to DNA damage.</title>
        <authorList>
            <person name="Matsuoka S."/>
            <person name="Ballif B.A."/>
            <person name="Smogorzewska A."/>
            <person name="McDonald E.R. III"/>
            <person name="Hurov K.E."/>
            <person name="Luo J."/>
            <person name="Bakalarski C.E."/>
            <person name="Zhao Z."/>
            <person name="Solimini N."/>
            <person name="Lerenthal Y."/>
            <person name="Shiloh Y."/>
            <person name="Gygi S.P."/>
            <person name="Elledge S.J."/>
        </authorList>
    </citation>
    <scope>IDENTIFICATION BY MASS SPECTROMETRY [LARGE SCALE ANALYSIS]</scope>
    <source>
        <tissue>Embryonic kidney</tissue>
    </source>
</reference>
<reference key="13">
    <citation type="journal article" date="2008" name="Mol. Cell">
        <title>Kinase-selective enrichment enables quantitative phosphoproteomics of the kinome across the cell cycle.</title>
        <authorList>
            <person name="Daub H."/>
            <person name="Olsen J.V."/>
            <person name="Bairlein M."/>
            <person name="Gnad F."/>
            <person name="Oppermann F.S."/>
            <person name="Korner R."/>
            <person name="Greff Z."/>
            <person name="Keri G."/>
            <person name="Stemmann O."/>
            <person name="Mann M."/>
        </authorList>
    </citation>
    <scope>PHOSPHORYLATION [LARGE SCALE ANALYSIS] AT SER-303</scope>
    <scope>IDENTIFICATION BY MASS SPECTROMETRY [LARGE SCALE ANALYSIS]</scope>
    <source>
        <tissue>Cervix carcinoma</tissue>
    </source>
</reference>
<reference key="14">
    <citation type="journal article" date="2008" name="Proc. Natl. Acad. Sci. U.S.A.">
        <title>A quantitative atlas of mitotic phosphorylation.</title>
        <authorList>
            <person name="Dephoure N."/>
            <person name="Zhou C."/>
            <person name="Villen J."/>
            <person name="Beausoleil S.A."/>
            <person name="Bakalarski C.E."/>
            <person name="Elledge S.J."/>
            <person name="Gygi S.P."/>
        </authorList>
    </citation>
    <scope>PHOSPHORYLATION [LARGE SCALE ANALYSIS] AT SER-303</scope>
    <scope>IDENTIFICATION BY MASS SPECTROMETRY [LARGE SCALE ANALYSIS]</scope>
    <source>
        <tissue>Cervix carcinoma</tissue>
    </source>
</reference>
<reference key="15">
    <citation type="journal article" date="2009" name="Anal. Chem.">
        <title>Lys-N and trypsin cover complementary parts of the phosphoproteome in a refined SCX-based approach.</title>
        <authorList>
            <person name="Gauci S."/>
            <person name="Helbig A.O."/>
            <person name="Slijper M."/>
            <person name="Krijgsveld J."/>
            <person name="Heck A.J."/>
            <person name="Mohammed S."/>
        </authorList>
    </citation>
    <scope>ACETYLATION [LARGE SCALE ANALYSIS] AT ALA-2</scope>
    <scope>CLEAVAGE OF INITIATOR METHIONINE [LARGE SCALE ANALYSIS]</scope>
    <scope>IDENTIFICATION BY MASS SPECTROMETRY [LARGE SCALE ANALYSIS]</scope>
</reference>
<reference key="16">
    <citation type="journal article" date="2010" name="Sci. Signal.">
        <title>Quantitative phosphoproteomics reveals widespread full phosphorylation site occupancy during mitosis.</title>
        <authorList>
            <person name="Olsen J.V."/>
            <person name="Vermeulen M."/>
            <person name="Santamaria A."/>
            <person name="Kumar C."/>
            <person name="Miller M.L."/>
            <person name="Jensen L.J."/>
            <person name="Gnad F."/>
            <person name="Cox J."/>
            <person name="Jensen T.S."/>
            <person name="Nigg E.A."/>
            <person name="Brunak S."/>
            <person name="Mann M."/>
        </authorList>
    </citation>
    <scope>PHOSPHORYLATION [LARGE SCALE ANALYSIS] AT SER-303</scope>
    <scope>IDENTIFICATION BY MASS SPECTROMETRY [LARGE SCALE ANALYSIS]</scope>
    <source>
        <tissue>Cervix carcinoma</tissue>
    </source>
</reference>
<reference key="17">
    <citation type="journal article" date="2011" name="BMC Syst. Biol.">
        <title>Initial characterization of the human central proteome.</title>
        <authorList>
            <person name="Burkard T.R."/>
            <person name="Planyavsky M."/>
            <person name="Kaupe I."/>
            <person name="Breitwieser F.P."/>
            <person name="Buerckstuemmer T."/>
            <person name="Bennett K.L."/>
            <person name="Superti-Furga G."/>
            <person name="Colinge J."/>
        </authorList>
    </citation>
    <scope>IDENTIFICATION BY MASS SPECTROMETRY [LARGE SCALE ANALYSIS]</scope>
</reference>
<reference key="18">
    <citation type="journal article" date="2012" name="Mol. Cell. Proteomics">
        <title>Comparative large-scale characterisation of plant vs. mammal proteins reveals similar and idiosyncratic N-alpha acetylation features.</title>
        <authorList>
            <person name="Bienvenut W.V."/>
            <person name="Sumpton D."/>
            <person name="Martinez A."/>
            <person name="Lilla S."/>
            <person name="Espagne C."/>
            <person name="Meinnel T."/>
            <person name="Giglione C."/>
        </authorList>
    </citation>
    <scope>ACETYLATION [LARGE SCALE ANALYSIS] AT ALA-2</scope>
    <scope>CLEAVAGE OF INITIATOR METHIONINE [LARGE SCALE ANALYSIS]</scope>
    <scope>IDENTIFICATION BY MASS SPECTROMETRY [LARGE SCALE ANALYSIS]</scope>
</reference>
<reference key="19">
    <citation type="journal article" date="2012" name="Proc. Natl. Acad. Sci. U.S.A.">
        <title>N-terminal acetylome analyses and functional insights of the N-terminal acetyltransferase NatB.</title>
        <authorList>
            <person name="Van Damme P."/>
            <person name="Lasa M."/>
            <person name="Polevoda B."/>
            <person name="Gazquez C."/>
            <person name="Elosegui-Artola A."/>
            <person name="Kim D.S."/>
            <person name="De Juan-Pardo E."/>
            <person name="Demeyer K."/>
            <person name="Hole K."/>
            <person name="Larrea E."/>
            <person name="Timmerman E."/>
            <person name="Prieto J."/>
            <person name="Arnesen T."/>
            <person name="Sherman F."/>
            <person name="Gevaert K."/>
            <person name="Aldabe R."/>
        </authorList>
    </citation>
    <scope>ACETYLATION [LARGE SCALE ANALYSIS] AT ALA-2</scope>
    <scope>CLEAVAGE OF INITIATOR METHIONINE [LARGE SCALE ANALYSIS]</scope>
    <scope>IDENTIFICATION BY MASS SPECTROMETRY [LARGE SCALE ANALYSIS]</scope>
</reference>
<reference key="20">
    <citation type="journal article" date="2013" name="J. Proteome Res.">
        <title>Toward a comprehensive characterization of a human cancer cell phosphoproteome.</title>
        <authorList>
            <person name="Zhou H."/>
            <person name="Di Palma S."/>
            <person name="Preisinger C."/>
            <person name="Peng M."/>
            <person name="Polat A.N."/>
            <person name="Heck A.J."/>
            <person name="Mohammed S."/>
        </authorList>
    </citation>
    <scope>PHOSPHORYLATION [LARGE SCALE ANALYSIS] AT SER-303 AND SER-528</scope>
    <scope>IDENTIFICATION BY MASS SPECTROMETRY [LARGE SCALE ANALYSIS]</scope>
    <source>
        <tissue>Cervix carcinoma</tissue>
        <tissue>Erythroleukemia</tissue>
    </source>
</reference>
<reference key="21">
    <citation type="journal article" date="2014" name="J. Proteomics">
        <title>An enzyme assisted RP-RPLC approach for in-depth analysis of human liver phosphoproteome.</title>
        <authorList>
            <person name="Bian Y."/>
            <person name="Song C."/>
            <person name="Cheng K."/>
            <person name="Dong M."/>
            <person name="Wang F."/>
            <person name="Huang J."/>
            <person name="Sun D."/>
            <person name="Wang L."/>
            <person name="Ye M."/>
            <person name="Zou H."/>
        </authorList>
    </citation>
    <scope>PHOSPHORYLATION [LARGE SCALE ANALYSIS] AT SER-303</scope>
    <scope>IDENTIFICATION BY MASS SPECTROMETRY [LARGE SCALE ANALYSIS]</scope>
    <source>
        <tissue>Liver</tissue>
    </source>
</reference>
<reference key="22">
    <citation type="journal article" date="2015" name="Proteomics">
        <title>N-terminome analysis of the human mitochondrial proteome.</title>
        <authorList>
            <person name="Vaca Jacome A.S."/>
            <person name="Rabilloud T."/>
            <person name="Schaeffer-Reiss C."/>
            <person name="Rompais M."/>
            <person name="Ayoub D."/>
            <person name="Lane L."/>
            <person name="Bairoch A."/>
            <person name="Van Dorsselaer A."/>
            <person name="Carapito C."/>
        </authorList>
    </citation>
    <scope>ACETYLATION [LARGE SCALE ANALYSIS] AT ALA-2</scope>
    <scope>CLEAVAGE OF INITIATOR METHIONINE [LARGE SCALE ANALYSIS]</scope>
    <scope>IDENTIFICATION BY MASS SPECTROMETRY [LARGE SCALE ANALYSIS]</scope>
</reference>
<name>SCFD1_HUMAN</name>
<proteinExistence type="evidence at protein level"/>
<gene>
    <name type="primary">SCFD1</name>
    <name type="synonym">C14orf163</name>
    <name type="synonym">KIAA0917</name>
    <name type="synonym">STXBP1L2</name>
    <name type="ORF">FKSG23</name>
</gene>
<dbReference type="EMBL" id="AB020724">
    <property type="protein sequence ID" value="BAA74940.2"/>
    <property type="status" value="ALT_INIT"/>
    <property type="molecule type" value="mRNA"/>
</dbReference>
<dbReference type="EMBL" id="AF092139">
    <property type="protein sequence ID" value="AAD40381.1"/>
    <property type="status" value="ALT_FRAME"/>
    <property type="molecule type" value="mRNA"/>
</dbReference>
<dbReference type="EMBL" id="AF110646">
    <property type="protein sequence ID" value="AAD48586.1"/>
    <property type="status" value="ALT_FRAME"/>
    <property type="molecule type" value="mRNA"/>
</dbReference>
<dbReference type="EMBL" id="AF319958">
    <property type="protein sequence ID" value="AAG50273.1"/>
    <property type="molecule type" value="mRNA"/>
</dbReference>
<dbReference type="EMBL" id="AF086916">
    <property type="protein sequence ID" value="AAP97146.1"/>
    <property type="status" value="ALT_FRAME"/>
    <property type="molecule type" value="mRNA"/>
</dbReference>
<dbReference type="EMBL" id="AK290410">
    <property type="protein sequence ID" value="BAF83099.1"/>
    <property type="molecule type" value="mRNA"/>
</dbReference>
<dbReference type="EMBL" id="AK298622">
    <property type="protein sequence ID" value="BAH12830.1"/>
    <property type="molecule type" value="mRNA"/>
</dbReference>
<dbReference type="EMBL" id="AK297873">
    <property type="protein sequence ID" value="BAH12683.1"/>
    <property type="molecule type" value="mRNA"/>
</dbReference>
<dbReference type="EMBL" id="AK316212">
    <property type="protein sequence ID" value="BAH14583.1"/>
    <property type="molecule type" value="mRNA"/>
</dbReference>
<dbReference type="EMBL" id="AL121852">
    <property type="status" value="NOT_ANNOTATED_CDS"/>
    <property type="molecule type" value="Genomic_DNA"/>
</dbReference>
<dbReference type="EMBL" id="CH471078">
    <property type="protein sequence ID" value="EAW65968.1"/>
    <property type="molecule type" value="Genomic_DNA"/>
</dbReference>
<dbReference type="EMBL" id="BC017734">
    <property type="protein sequence ID" value="AAH17734.1"/>
    <property type="molecule type" value="mRNA"/>
</dbReference>
<dbReference type="EMBL" id="AF067205">
    <property type="protein sequence ID" value="AAC17907.1"/>
    <property type="molecule type" value="mRNA"/>
</dbReference>
<dbReference type="CCDS" id="CCDS45092.1">
    <molecule id="Q8WVM8-3"/>
</dbReference>
<dbReference type="CCDS" id="CCDS58308.1">
    <molecule id="Q8WVM8-2"/>
</dbReference>
<dbReference type="CCDS" id="CCDS9639.1">
    <molecule id="Q8WVM8-1"/>
</dbReference>
<dbReference type="RefSeq" id="NP_001244305.1">
    <molecule id="Q8WVM8-2"/>
    <property type="nucleotide sequence ID" value="NM_001257376.1"/>
</dbReference>
<dbReference type="RefSeq" id="NP_001269961.1">
    <property type="nucleotide sequence ID" value="NM_001283032.1"/>
</dbReference>
<dbReference type="RefSeq" id="NP_057190.2">
    <molecule id="Q8WVM8-1"/>
    <property type="nucleotide sequence ID" value="NM_016106.3"/>
</dbReference>
<dbReference type="RefSeq" id="NP_878255.1">
    <molecule id="Q8WVM8-3"/>
    <property type="nucleotide sequence ID" value="NM_182835.2"/>
</dbReference>
<dbReference type="SMR" id="Q8WVM8"/>
<dbReference type="BioGRID" id="116860">
    <property type="interactions" value="255"/>
</dbReference>
<dbReference type="FunCoup" id="Q8WVM8">
    <property type="interactions" value="4016"/>
</dbReference>
<dbReference type="IntAct" id="Q8WVM8">
    <property type="interactions" value="125"/>
</dbReference>
<dbReference type="MINT" id="Q8WVM8"/>
<dbReference type="STRING" id="9606.ENSP00000390783"/>
<dbReference type="GlyCosmos" id="Q8WVM8">
    <property type="glycosylation" value="2 sites, 1 glycan"/>
</dbReference>
<dbReference type="GlyGen" id="Q8WVM8">
    <property type="glycosylation" value="3 sites, 1 O-linked glycan (3 sites)"/>
</dbReference>
<dbReference type="iPTMnet" id="Q8WVM8"/>
<dbReference type="MetOSite" id="Q8WVM8"/>
<dbReference type="PhosphoSitePlus" id="Q8WVM8"/>
<dbReference type="SwissPalm" id="Q8WVM8"/>
<dbReference type="BioMuta" id="SCFD1"/>
<dbReference type="DMDM" id="51316882"/>
<dbReference type="jPOST" id="Q8WVM8"/>
<dbReference type="MassIVE" id="Q8WVM8"/>
<dbReference type="PaxDb" id="9606-ENSP00000390783"/>
<dbReference type="PeptideAtlas" id="Q8WVM8"/>
<dbReference type="ProteomicsDB" id="6636"/>
<dbReference type="ProteomicsDB" id="6669"/>
<dbReference type="ProteomicsDB" id="74805">
    <molecule id="Q8WVM8-1"/>
</dbReference>
<dbReference type="Pumba" id="Q8WVM8"/>
<dbReference type="Antibodypedia" id="112">
    <property type="antibodies" value="368 antibodies from 27 providers"/>
</dbReference>
<dbReference type="DNASU" id="23256"/>
<dbReference type="Ensembl" id="ENST00000396629.6">
    <molecule id="Q8WVM8-2"/>
    <property type="protein sequence ID" value="ENSP00000379870.2"/>
    <property type="gene ID" value="ENSG00000092108.22"/>
</dbReference>
<dbReference type="Ensembl" id="ENST00000458591.7">
    <molecule id="Q8WVM8-1"/>
    <property type="protein sequence ID" value="ENSP00000390783.2"/>
    <property type="gene ID" value="ENSG00000092108.22"/>
</dbReference>
<dbReference type="Ensembl" id="ENST00000544052.6">
    <molecule id="Q8WVM8-3"/>
    <property type="protein sequence ID" value="ENSP00000443010.2"/>
    <property type="gene ID" value="ENSG00000092108.22"/>
</dbReference>
<dbReference type="Ensembl" id="ENST00000678124.1">
    <molecule id="Q8WVM8-3"/>
    <property type="protein sequence ID" value="ENSP00000503029.1"/>
    <property type="gene ID" value="ENSG00000092108.22"/>
</dbReference>
<dbReference type="GeneID" id="23256"/>
<dbReference type="KEGG" id="hsa:23256"/>
<dbReference type="MANE-Select" id="ENST00000458591.7">
    <property type="protein sequence ID" value="ENSP00000390783.2"/>
    <property type="RefSeq nucleotide sequence ID" value="NM_016106.4"/>
    <property type="RefSeq protein sequence ID" value="NP_057190.2"/>
</dbReference>
<dbReference type="UCSC" id="uc001wqm.3">
    <molecule id="Q8WVM8-1"/>
    <property type="organism name" value="human"/>
</dbReference>
<dbReference type="AGR" id="HGNC:20726"/>
<dbReference type="CTD" id="23256"/>
<dbReference type="DisGeNET" id="23256"/>
<dbReference type="GeneCards" id="SCFD1"/>
<dbReference type="HGNC" id="HGNC:20726">
    <property type="gene designation" value="SCFD1"/>
</dbReference>
<dbReference type="HPA" id="ENSG00000092108">
    <property type="expression patterns" value="Low tissue specificity"/>
</dbReference>
<dbReference type="MIM" id="618207">
    <property type="type" value="gene"/>
</dbReference>
<dbReference type="neXtProt" id="NX_Q8WVM8"/>
<dbReference type="OpenTargets" id="ENSG00000092108"/>
<dbReference type="PharmGKB" id="PA134946073"/>
<dbReference type="VEuPathDB" id="HostDB:ENSG00000092108"/>
<dbReference type="eggNOG" id="KOG1301">
    <property type="taxonomic scope" value="Eukaryota"/>
</dbReference>
<dbReference type="GeneTree" id="ENSGT00550000074845"/>
<dbReference type="HOGENOM" id="CLU_016216_3_1_1"/>
<dbReference type="InParanoid" id="Q8WVM8"/>
<dbReference type="OMA" id="VNDLRAW"/>
<dbReference type="OrthoDB" id="10251230at2759"/>
<dbReference type="PAN-GO" id="Q8WVM8">
    <property type="GO annotations" value="4 GO annotations based on evolutionary models"/>
</dbReference>
<dbReference type="PhylomeDB" id="Q8WVM8"/>
<dbReference type="TreeFam" id="TF105740"/>
<dbReference type="PathwayCommons" id="Q8WVM8"/>
<dbReference type="Reactome" id="R-HSA-204005">
    <property type="pathway name" value="COPII-mediated vesicle transport"/>
</dbReference>
<dbReference type="Reactome" id="R-HSA-8980692">
    <property type="pathway name" value="RHOA GTPase cycle"/>
</dbReference>
<dbReference type="SignaLink" id="Q8WVM8"/>
<dbReference type="BioGRID-ORCS" id="23256">
    <property type="hits" value="759 hits in 1158 CRISPR screens"/>
</dbReference>
<dbReference type="CD-CODE" id="FB4E32DD">
    <property type="entry name" value="Presynaptic clusters and postsynaptic densities"/>
</dbReference>
<dbReference type="ChiTaRS" id="SCFD1">
    <property type="organism name" value="human"/>
</dbReference>
<dbReference type="GeneWiki" id="SCFD1"/>
<dbReference type="GenomeRNAi" id="23256"/>
<dbReference type="Pharos" id="Q8WVM8">
    <property type="development level" value="Tbio"/>
</dbReference>
<dbReference type="PRO" id="PR:Q8WVM8"/>
<dbReference type="Proteomes" id="UP000005640">
    <property type="component" value="Chromosome 14"/>
</dbReference>
<dbReference type="RNAct" id="Q8WVM8">
    <property type="molecule type" value="protein"/>
</dbReference>
<dbReference type="Bgee" id="ENSG00000092108">
    <property type="expression patterns" value="Expressed in calcaneal tendon and 214 other cell types or tissues"/>
</dbReference>
<dbReference type="ExpressionAtlas" id="Q8WVM8">
    <property type="expression patterns" value="baseline and differential"/>
</dbReference>
<dbReference type="GO" id="GO:0005801">
    <property type="term" value="C:cis-Golgi network"/>
    <property type="evidence" value="ECO:0000314"/>
    <property type="project" value="UniProtKB"/>
</dbReference>
<dbReference type="GO" id="GO:0005829">
    <property type="term" value="C:cytosol"/>
    <property type="evidence" value="ECO:0000304"/>
    <property type="project" value="Reactome"/>
</dbReference>
<dbReference type="GO" id="GO:0005789">
    <property type="term" value="C:endoplasmic reticulum membrane"/>
    <property type="evidence" value="ECO:0007669"/>
    <property type="project" value="UniProtKB-SubCell"/>
</dbReference>
<dbReference type="GO" id="GO:0032580">
    <property type="term" value="C:Golgi cisterna membrane"/>
    <property type="evidence" value="ECO:0007669"/>
    <property type="project" value="UniProtKB-SubCell"/>
</dbReference>
<dbReference type="GO" id="GO:0000139">
    <property type="term" value="C:Golgi membrane"/>
    <property type="evidence" value="ECO:0000318"/>
    <property type="project" value="GO_Central"/>
</dbReference>
<dbReference type="GO" id="GO:0005798">
    <property type="term" value="C:Golgi-associated vesicle"/>
    <property type="evidence" value="ECO:0000250"/>
    <property type="project" value="UniProtKB"/>
</dbReference>
<dbReference type="GO" id="GO:0044877">
    <property type="term" value="F:protein-containing complex binding"/>
    <property type="evidence" value="ECO:0000250"/>
    <property type="project" value="UniProtKB"/>
</dbReference>
<dbReference type="GO" id="GO:0019905">
    <property type="term" value="F:syntaxin binding"/>
    <property type="evidence" value="ECO:0000250"/>
    <property type="project" value="UniProtKB"/>
</dbReference>
<dbReference type="GO" id="GO:0006888">
    <property type="term" value="P:endoplasmic reticulum to Golgi vesicle-mediated transport"/>
    <property type="evidence" value="ECO:0000318"/>
    <property type="project" value="GO_Central"/>
</dbReference>
<dbReference type="GO" id="GO:0006886">
    <property type="term" value="P:intracellular protein transport"/>
    <property type="evidence" value="ECO:0000318"/>
    <property type="project" value="GO_Central"/>
</dbReference>
<dbReference type="GO" id="GO:1902902">
    <property type="term" value="P:negative regulation of autophagosome assembly"/>
    <property type="evidence" value="ECO:0000315"/>
    <property type="project" value="UniProtKB"/>
</dbReference>
<dbReference type="GO" id="GO:0006892">
    <property type="term" value="P:post-Golgi vesicle-mediated transport"/>
    <property type="evidence" value="ECO:0000250"/>
    <property type="project" value="UniProtKB"/>
</dbReference>
<dbReference type="GO" id="GO:0060628">
    <property type="term" value="P:regulation of ER to Golgi vesicle-mediated transport"/>
    <property type="evidence" value="ECO:0000250"/>
    <property type="project" value="UniProtKB"/>
</dbReference>
<dbReference type="GO" id="GO:0051223">
    <property type="term" value="P:regulation of protein transport"/>
    <property type="evidence" value="ECO:0000315"/>
    <property type="project" value="UniProtKB"/>
</dbReference>
<dbReference type="GO" id="GO:0009636">
    <property type="term" value="P:response to toxic substance"/>
    <property type="evidence" value="ECO:0000270"/>
    <property type="project" value="UniProtKB"/>
</dbReference>
<dbReference type="GO" id="GO:0006890">
    <property type="term" value="P:retrograde vesicle-mediated transport, Golgi to endoplasmic reticulum"/>
    <property type="evidence" value="ECO:0000250"/>
    <property type="project" value="UniProtKB"/>
</dbReference>
<dbReference type="FunFam" id="1.25.40.60:FF:000002">
    <property type="entry name" value="Sec1 family domain containing 1"/>
    <property type="match status" value="1"/>
</dbReference>
<dbReference type="FunFam" id="3.40.50.2060:FF:000002">
    <property type="entry name" value="sec1 family domain-containing protein 1"/>
    <property type="match status" value="1"/>
</dbReference>
<dbReference type="Gene3D" id="1.25.40.60">
    <property type="match status" value="1"/>
</dbReference>
<dbReference type="Gene3D" id="3.40.50.1910">
    <property type="match status" value="1"/>
</dbReference>
<dbReference type="Gene3D" id="3.40.50.2060">
    <property type="match status" value="1"/>
</dbReference>
<dbReference type="Gene3D" id="3.90.830.10">
    <property type="entry name" value="Syntaxin Binding Protein 1, Chain A, domain 2"/>
    <property type="match status" value="1"/>
</dbReference>
<dbReference type="InterPro" id="IPR043154">
    <property type="entry name" value="Sec-1-like_dom1"/>
</dbReference>
<dbReference type="InterPro" id="IPR043127">
    <property type="entry name" value="Sec-1-like_dom3a"/>
</dbReference>
<dbReference type="InterPro" id="IPR001619">
    <property type="entry name" value="Sec1-like"/>
</dbReference>
<dbReference type="InterPro" id="IPR027482">
    <property type="entry name" value="Sec1-like_dom2"/>
</dbReference>
<dbReference type="InterPro" id="IPR036045">
    <property type="entry name" value="Sec1-like_sf"/>
</dbReference>
<dbReference type="PANTHER" id="PTHR11679">
    <property type="entry name" value="VESICLE PROTEIN SORTING-ASSOCIATED"/>
    <property type="match status" value="1"/>
</dbReference>
<dbReference type="Pfam" id="PF00995">
    <property type="entry name" value="Sec1"/>
    <property type="match status" value="1"/>
</dbReference>
<dbReference type="PIRSF" id="PIRSF005715">
    <property type="entry name" value="VPS45_Sec1"/>
    <property type="match status" value="1"/>
</dbReference>
<dbReference type="SUPFAM" id="SSF56815">
    <property type="entry name" value="Sec1/munc18-like (SM) proteins"/>
    <property type="match status" value="1"/>
</dbReference>